<comment type="function">
    <text>Binds to sialic acid-containing receptors on the cell surface, bringing about the attachment of the virus particle to the cell. This attachment induces virion internalization of about two third of the virus particles through clathrin-dependent endocytosis and about one third through a clathrin- and caveolin-independent pathway. Plays a major role in the determination of host range restriction and virulence. Class I viral fusion protein. Responsible for penetration of the virus into the cell cytoplasm by mediating the fusion of the membrane of the endocytosed virus particle with the endosomal membrane. Low pH in endosomes induces an irreversible conformational change in HA2, releasing the fusion hydrophobic peptide. Several trimers are required to form a competent fusion pore.</text>
</comment>
<comment type="function">
    <text evidence="1">Binds to sialic acid-containing receptors on the cell surface, bringing about the attachment of the virus particle to the cell. This attachment induces virion internalization either through clathrin-dependent endocytosis or through clathrin- and caveolin-independent pathway. Plays a major role in the determination of host range restriction and virulence. Class I viral fusion protein. Responsible for penetration of the virus into the cell cytoplasm by mediating the fusion of the membrane of the endocytosed virus particle with the endosomal membrane. Low pH in endosomes induces an irreversible conformational change in HA2, releasing the fusion hydrophobic peptide. Several trimers are required to form a competent fusion pore.</text>
</comment>
<comment type="subunit">
    <text evidence="1">Homotrimer of disulfide-linked HA1-HA2.</text>
</comment>
<comment type="subcellular location">
    <subcellularLocation>
        <location evidence="1">Virion membrane</location>
        <topology evidence="1">Single-pass type I membrane protein</topology>
    </subcellularLocation>
    <subcellularLocation>
        <location evidence="1">Host apical cell membrane</location>
        <topology evidence="1">Single-pass type I membrane protein</topology>
    </subcellularLocation>
    <text evidence="1">Targeted to the apical plasma membrane in epithelial polarized cells through a signal present in the transmembrane domain. Associated with glycosphingolipid- and cholesterol-enriched detergent-resistant lipid rafts.</text>
</comment>
<comment type="PTM">
    <text evidence="1">Palmitoylated.</text>
</comment>
<comment type="PTM">
    <text evidence="1">In natural infection, inactive HA is matured into HA1 and HA2 outside the cell by one or more trypsin-like, arginine-specific endoprotease secreted by the bronchial epithelial cells. One identified protease that may be involved in this process is secreted in lungs by club cells.</text>
</comment>
<comment type="miscellaneous">
    <text>Major glycoprotein, comprises over 80% of the envelope proteins present in virus particle.</text>
</comment>
<comment type="miscellaneous">
    <text>The extent of infection into host organism is determined by HA. Influenza viruses bud from the apical surface of polarized epithelial cells (e.g. bronchial epithelial cells) into lumen of lungs and are therefore usually pneumotropic. The reason is that HA is cleaved by tryptase clara which is restricted to lungs. However, HAs of H5 and H7 pantropic avian viruses subtypes can be cleaved by furin and subtilisin-type enzymes, allowing the virus to grow in other organs than lungs.</text>
</comment>
<comment type="miscellaneous">
    <text evidence="2">The influenza A genome consist of 8 RNA segments. Genetic variation of hemagglutinin and/or neuraminidase genes results in the emergence of new influenza strains. The mechanism of variation can be the result of point mutations or the result of genetic reassortment between segments of two different strains.</text>
</comment>
<comment type="similarity">
    <text evidence="1">Belongs to the influenza viruses hemagglutinin family.</text>
</comment>
<accession>P03456</accession>
<accession>Q0A465</accession>
<sequence>MEKFIAIATLASTNAYDRICIGYQSNNSTDTVNTLIEQNVPVTQTMELVETEKHPAYCNTDLGAPLELRDCKIEAVIYGNPKCDIHLKDQGWSYIVERPSAPEGMCYPGSVENLEELRFVFSSAASYKRIRLFDYSRWNVTRSGTSKACNASTGGQSFYRSINWLTKKEPDTYDFNEGAYVNNEDGDIIFLWGIHHPPDTKEQTTLYKNANTLSSVTTNTINRSFQPNIGPRPLVRGQQGRMDYYWGILKRGETLKIRTNGNLIAPEFGYLLKGESYGRIIQNEDIPIGNCNTKCQTYAGAINSSKPFQNASRHYMGECPKYVKKASLRLAVGLRNTPSVEPRGLFGAIAGFIEGGWSGMIDGWYGFHHSNSEGTGMAADQKSTQEAIDKITNKVNNIVDKMNREFEVVNHEFSEVEKRINMINDKIDDQIEDLWAYNAELLVLLENQKTLDEHDSNVKNLFDEVKRRLSANAIDAGNGCFDILHKCDNECMETIKNGTYDHKEYEEEAKLERSKINGVKLEENTTYKILSIYSTVAASLCLAILIAGGLILGMQNGSCRCMFCI</sequence>
<reference key="1">
    <citation type="journal article" date="1991" name="Virology">
        <title>Comparison of complete amino acid sequences and receptor-binding properties among 13 serotypes of hemagglutinins of influenza A viruses.</title>
        <authorList>
            <person name="Nobusawa E."/>
            <person name="Aoyama T."/>
            <person name="Kato H."/>
            <person name="Suzuki Y."/>
            <person name="Tateno Y."/>
            <person name="Nakajima K."/>
        </authorList>
    </citation>
    <scope>NUCLEOTIDE SEQUENCE [GENOMIC RNA]</scope>
</reference>
<reference key="2">
    <citation type="journal article" date="2006" name="Science">
        <title>Large-scale sequence analysis of avian influenza isolates.</title>
        <authorList>
            <person name="Obenauer J.C."/>
            <person name="Denson J."/>
            <person name="Mehta P.K."/>
            <person name="Su X."/>
            <person name="Mukatira S."/>
            <person name="Finkelstein D.B."/>
            <person name="Xu X."/>
            <person name="Wang J."/>
            <person name="Ma J."/>
            <person name="Fan Y."/>
            <person name="Rakestraw K.M."/>
            <person name="Webster R.G."/>
            <person name="Hoffmann E."/>
            <person name="Krauss S."/>
            <person name="Zheng J."/>
            <person name="Zhang Z."/>
            <person name="Naeve C.W."/>
        </authorList>
    </citation>
    <scope>NUCLEOTIDE SEQUENCE [GENOMIC RNA]</scope>
</reference>
<reference key="3">
    <citation type="journal article" date="1981" name="Proc. Natl. Acad. Sci. U.S.A.">
        <title>Sequence relationships among the hemagglutinin genes of 12 subtypes of influenza A virus.</title>
        <authorList>
            <person name="Air G.M."/>
        </authorList>
    </citation>
    <scope>NUCLEOTIDE SEQUENCE [GENOMIC RNA] OF 1-99</scope>
</reference>
<organism>
    <name type="scientific">Influenza A virus (strain A/Turkey/Ontario/6118/1968 H8N4)</name>
    <dbReference type="NCBI Taxonomy" id="311175"/>
    <lineage>
        <taxon>Viruses</taxon>
        <taxon>Riboviria</taxon>
        <taxon>Orthornavirae</taxon>
        <taxon>Negarnaviricota</taxon>
        <taxon>Polyploviricotina</taxon>
        <taxon>Insthoviricetes</taxon>
        <taxon>Articulavirales</taxon>
        <taxon>Orthomyxoviridae</taxon>
        <taxon>Alphainfluenzavirus</taxon>
        <taxon>Alphainfluenzavirus influenzae</taxon>
        <taxon>Influenza A virus</taxon>
    </lineage>
</organism>
<gene>
    <name evidence="1" type="primary">HA</name>
</gene>
<organismHost>
    <name type="scientific">Aves</name>
    <dbReference type="NCBI Taxonomy" id="8782"/>
</organismHost>
<protein>
    <recommendedName>
        <fullName evidence="1">Hemagglutinin</fullName>
    </recommendedName>
    <component>
        <recommendedName>
            <fullName evidence="1">Hemagglutinin HA1 chain</fullName>
        </recommendedName>
    </component>
    <component>
        <recommendedName>
            <fullName evidence="1">Hemagglutinin HA2 chain</fullName>
        </recommendedName>
    </component>
</protein>
<keyword id="KW-1167">Clathrin- and caveolin-independent endocytosis of virus by host</keyword>
<keyword id="KW-1165">Clathrin-mediated endocytosis of virus by host</keyword>
<keyword id="KW-1015">Disulfide bond</keyword>
<keyword id="KW-1170">Fusion of virus membrane with host endosomal membrane</keyword>
<keyword id="KW-1168">Fusion of virus membrane with host membrane</keyword>
<keyword id="KW-0325">Glycoprotein</keyword>
<keyword id="KW-0348">Hemagglutinin</keyword>
<keyword id="KW-1032">Host cell membrane</keyword>
<keyword id="KW-1043">Host membrane</keyword>
<keyword id="KW-0945">Host-virus interaction</keyword>
<keyword id="KW-0449">Lipoprotein</keyword>
<keyword id="KW-0472">Membrane</keyword>
<keyword id="KW-0564">Palmitate</keyword>
<keyword id="KW-0732">Signal</keyword>
<keyword id="KW-0812">Transmembrane</keyword>
<keyword id="KW-1133">Transmembrane helix</keyword>
<keyword id="KW-1161">Viral attachment to host cell</keyword>
<keyword id="KW-0261">Viral envelope protein</keyword>
<keyword id="KW-1162">Viral penetration into host cytoplasm</keyword>
<keyword id="KW-0946">Virion</keyword>
<keyword id="KW-1164">Virus endocytosis by host</keyword>
<keyword id="KW-1160">Virus entry into host cell</keyword>
<dbReference type="EMBL" id="D90304">
    <property type="protein sequence ID" value="BAA14334.1"/>
    <property type="molecule type" value="Genomic_RNA"/>
</dbReference>
<dbReference type="EMBL" id="CY014659">
    <property type="protein sequence ID" value="ABI84519.1"/>
    <property type="molecule type" value="Genomic_RNA"/>
</dbReference>
<dbReference type="EMBL" id="J02089">
    <property type="protein sequence ID" value="AAA43177.1"/>
    <property type="molecule type" value="Genomic_RNA"/>
</dbReference>
<dbReference type="PIR" id="F39987">
    <property type="entry name" value="HMIVTN"/>
</dbReference>
<dbReference type="SMR" id="P03456"/>
<dbReference type="GlyCosmos" id="P03456">
    <property type="glycosylation" value="9 sites, No reported glycans"/>
</dbReference>
<dbReference type="PRO" id="PR:P03456"/>
<dbReference type="Proteomes" id="UP000007770">
    <property type="component" value="Genome"/>
</dbReference>
<dbReference type="Proteomes" id="UP000131583">
    <property type="component" value="Genome"/>
</dbReference>
<dbReference type="GO" id="GO:0020002">
    <property type="term" value="C:host cell plasma membrane"/>
    <property type="evidence" value="ECO:0007669"/>
    <property type="project" value="UniProtKB-SubCell"/>
</dbReference>
<dbReference type="GO" id="GO:0016020">
    <property type="term" value="C:membrane"/>
    <property type="evidence" value="ECO:0007669"/>
    <property type="project" value="UniProtKB-UniRule"/>
</dbReference>
<dbReference type="GO" id="GO:0019031">
    <property type="term" value="C:viral envelope"/>
    <property type="evidence" value="ECO:0007669"/>
    <property type="project" value="UniProtKB-UniRule"/>
</dbReference>
<dbReference type="GO" id="GO:0055036">
    <property type="term" value="C:virion membrane"/>
    <property type="evidence" value="ECO:0007669"/>
    <property type="project" value="UniProtKB-SubCell"/>
</dbReference>
<dbReference type="GO" id="GO:0046789">
    <property type="term" value="F:host cell surface receptor binding"/>
    <property type="evidence" value="ECO:0007669"/>
    <property type="project" value="UniProtKB-UniRule"/>
</dbReference>
<dbReference type="GO" id="GO:0075512">
    <property type="term" value="P:clathrin-dependent endocytosis of virus by host cell"/>
    <property type="evidence" value="ECO:0007669"/>
    <property type="project" value="UniProtKB-UniRule"/>
</dbReference>
<dbReference type="GO" id="GO:0039654">
    <property type="term" value="P:fusion of virus membrane with host endosome membrane"/>
    <property type="evidence" value="ECO:0007669"/>
    <property type="project" value="UniProtKB-UniRule"/>
</dbReference>
<dbReference type="GO" id="GO:0019064">
    <property type="term" value="P:fusion of virus membrane with host plasma membrane"/>
    <property type="evidence" value="ECO:0007669"/>
    <property type="project" value="InterPro"/>
</dbReference>
<dbReference type="GO" id="GO:0046761">
    <property type="term" value="P:viral budding from plasma membrane"/>
    <property type="evidence" value="ECO:0007669"/>
    <property type="project" value="UniProtKB-UniRule"/>
</dbReference>
<dbReference type="GO" id="GO:0019062">
    <property type="term" value="P:virion attachment to host cell"/>
    <property type="evidence" value="ECO:0007669"/>
    <property type="project" value="UniProtKB-KW"/>
</dbReference>
<dbReference type="Gene3D" id="3.90.20.10">
    <property type="match status" value="1"/>
</dbReference>
<dbReference type="Gene3D" id="3.90.209.20">
    <property type="match status" value="1"/>
</dbReference>
<dbReference type="HAMAP" id="MF_04072">
    <property type="entry name" value="INFV_HEMA"/>
    <property type="match status" value="1"/>
</dbReference>
<dbReference type="InterPro" id="IPR008980">
    <property type="entry name" value="Capsid_hemagglutn"/>
</dbReference>
<dbReference type="InterPro" id="IPR013828">
    <property type="entry name" value="Hemagglutn_HA1_a/b_dom_sf"/>
</dbReference>
<dbReference type="InterPro" id="IPR000149">
    <property type="entry name" value="Hemagglutn_influenz_A"/>
</dbReference>
<dbReference type="InterPro" id="IPR001364">
    <property type="entry name" value="Hemagglutn_influenz_A/B"/>
</dbReference>
<dbReference type="Pfam" id="PF00509">
    <property type="entry name" value="Hemagglutinin"/>
    <property type="match status" value="1"/>
</dbReference>
<dbReference type="PRINTS" id="PR00330">
    <property type="entry name" value="HEMAGGLUTN1"/>
</dbReference>
<dbReference type="PRINTS" id="PR00329">
    <property type="entry name" value="HEMAGGLUTN12"/>
</dbReference>
<dbReference type="SUPFAM" id="SSF58064">
    <property type="entry name" value="Influenza hemagglutinin (stalk)"/>
    <property type="match status" value="1"/>
</dbReference>
<dbReference type="SUPFAM" id="SSF49818">
    <property type="entry name" value="Viral protein domain"/>
    <property type="match status" value="1"/>
</dbReference>
<feature type="signal peptide" evidence="1">
    <location>
        <begin position="1"/>
        <end position="15"/>
    </location>
</feature>
<feature type="chain" id="PRO_0000440413" description="Hemagglutinin" evidence="1">
    <location>
        <begin position="16"/>
        <end position="565"/>
    </location>
</feature>
<feature type="chain" id="PRO_0000039054" description="Hemagglutinin HA1 chain" evidence="1">
    <location>
        <begin position="17"/>
        <end position="342"/>
    </location>
</feature>
<feature type="chain" id="PRO_0000039055" description="Hemagglutinin HA2 chain" evidence="1">
    <location>
        <begin position="344"/>
        <end position="565"/>
    </location>
</feature>
<feature type="topological domain" description="Extracellular" evidence="1">
    <location>
        <begin position="17"/>
        <end position="528"/>
    </location>
</feature>
<feature type="transmembrane region" description="Helical" evidence="1">
    <location>
        <begin position="529"/>
        <end position="549"/>
    </location>
</feature>
<feature type="topological domain" description="Cytoplasmic" evidence="1">
    <location>
        <begin position="550"/>
        <end position="565"/>
    </location>
</feature>
<feature type="site" description="Cleavage; by host" evidence="1">
    <location>
        <begin position="343"/>
        <end position="344"/>
    </location>
</feature>
<feature type="lipid moiety-binding region" description="S-palmitoyl cysteine; by host" evidence="1">
    <location>
        <position position="561"/>
    </location>
</feature>
<feature type="lipid moiety-binding region" description="S-palmitoyl cysteine; by host" evidence="1">
    <location>
        <position position="564"/>
    </location>
</feature>
<feature type="glycosylation site" description="N-linked (GlcNAc...) asparagine; by host" evidence="1">
    <location>
        <position position="26"/>
    </location>
</feature>
<feature type="glycosylation site" description="N-linked (GlcNAc...) asparagine; by host" evidence="1">
    <location>
        <position position="27"/>
    </location>
</feature>
<feature type="glycosylation site" description="N-linked (GlcNAc...) asparagine; by host" evidence="1">
    <location>
        <position position="139"/>
    </location>
</feature>
<feature type="glycosylation site" description="N-linked (GlcNAc...) asparagine; by host" evidence="1">
    <location>
        <position position="150"/>
    </location>
</feature>
<feature type="glycosylation site" description="N-linked (GlcNAc...) asparagine; by host" evidence="1">
    <location>
        <position position="222"/>
    </location>
</feature>
<feature type="glycosylation site" description="N-linked (GlcNAc...) asparagine; by host" evidence="1">
    <location>
        <position position="303"/>
    </location>
</feature>
<feature type="glycosylation site" description="N-linked (GlcNAc...) asparagine; by host" evidence="1">
    <location>
        <position position="310"/>
    </location>
</feature>
<feature type="glycosylation site" description="N-linked (GlcNAc...) asparagine; by host" evidence="1">
    <location>
        <position position="497"/>
    </location>
</feature>
<feature type="glycosylation site" description="N-linked (GlcNAc...) asparagine; by host" evidence="1">
    <location>
        <position position="524"/>
    </location>
</feature>
<feature type="disulfide bond" description="Interchain (between HA1 and HA2 chains)" evidence="1">
    <location>
        <begin position="20"/>
        <end position="480"/>
    </location>
</feature>
<feature type="disulfide bond" evidence="1">
    <location>
        <begin position="58"/>
        <end position="291"/>
    </location>
</feature>
<feature type="disulfide bond" evidence="1">
    <location>
        <begin position="71"/>
        <end position="83"/>
    </location>
</feature>
<feature type="disulfide bond" evidence="1">
    <location>
        <begin position="106"/>
        <end position="149"/>
    </location>
</feature>
<feature type="disulfide bond" evidence="1">
    <location>
        <begin position="295"/>
        <end position="319"/>
    </location>
</feature>
<feature type="disulfide bond" evidence="1">
    <location>
        <begin position="487"/>
        <end position="491"/>
    </location>
</feature>
<feature type="sequence conflict" description="In Ref. 2 and 3." evidence="2" ref="2 3">
    <original>T</original>
    <variation>ML</variation>
    <location>
        <position position="9"/>
    </location>
</feature>
<feature type="sequence conflict" description="In Ref. 3; AAA43177." evidence="2" ref="3">
    <original>I</original>
    <variation>T</variation>
    <location>
        <position position="36"/>
    </location>
</feature>
<feature type="sequence conflict" description="In Ref. 3; AAA43177." evidence="2" ref="3">
    <original>DQ</original>
    <variation>VN</variation>
    <location>
        <begin position="89"/>
        <end position="90"/>
    </location>
</feature>
<feature type="sequence conflict" description="In Ref. 2; ABI84519." evidence="2" ref="2">
    <original>E</original>
    <variation>K</variation>
    <location>
        <position position="169"/>
    </location>
</feature>
<name>HEMA_I68A3</name>
<evidence type="ECO:0000255" key="1">
    <source>
        <dbReference type="HAMAP-Rule" id="MF_04072"/>
    </source>
</evidence>
<evidence type="ECO:0000305" key="2"/>
<proteinExistence type="inferred from homology"/>